<dbReference type="EC" id="5.4.99.12" evidence="1"/>
<dbReference type="EMBL" id="CP000947">
    <property type="protein sequence ID" value="ACA32477.1"/>
    <property type="molecule type" value="Genomic_DNA"/>
</dbReference>
<dbReference type="RefSeq" id="WP_012341619.1">
    <property type="nucleotide sequence ID" value="NC_010519.1"/>
</dbReference>
<dbReference type="SMR" id="B0USP1"/>
<dbReference type="STRING" id="228400.HSM_0804"/>
<dbReference type="GeneID" id="31487093"/>
<dbReference type="KEGG" id="hsm:HSM_0804"/>
<dbReference type="HOGENOM" id="CLU_014673_0_2_6"/>
<dbReference type="GO" id="GO:0003723">
    <property type="term" value="F:RNA binding"/>
    <property type="evidence" value="ECO:0007669"/>
    <property type="project" value="InterPro"/>
</dbReference>
<dbReference type="GO" id="GO:0160147">
    <property type="term" value="F:tRNA pseudouridine(38-40) synthase activity"/>
    <property type="evidence" value="ECO:0007669"/>
    <property type="project" value="UniProtKB-EC"/>
</dbReference>
<dbReference type="GO" id="GO:0031119">
    <property type="term" value="P:tRNA pseudouridine synthesis"/>
    <property type="evidence" value="ECO:0007669"/>
    <property type="project" value="UniProtKB-UniRule"/>
</dbReference>
<dbReference type="CDD" id="cd02570">
    <property type="entry name" value="PseudoU_synth_EcTruA"/>
    <property type="match status" value="1"/>
</dbReference>
<dbReference type="FunFam" id="3.30.70.580:FF:000001">
    <property type="entry name" value="tRNA pseudouridine synthase A"/>
    <property type="match status" value="1"/>
</dbReference>
<dbReference type="FunFam" id="3.30.70.660:FF:000001">
    <property type="entry name" value="tRNA pseudouridine synthase A"/>
    <property type="match status" value="1"/>
</dbReference>
<dbReference type="Gene3D" id="3.30.70.660">
    <property type="entry name" value="Pseudouridine synthase I, catalytic domain, C-terminal subdomain"/>
    <property type="match status" value="1"/>
</dbReference>
<dbReference type="Gene3D" id="3.30.70.580">
    <property type="entry name" value="Pseudouridine synthase I, catalytic domain, N-terminal subdomain"/>
    <property type="match status" value="1"/>
</dbReference>
<dbReference type="HAMAP" id="MF_00171">
    <property type="entry name" value="TruA"/>
    <property type="match status" value="1"/>
</dbReference>
<dbReference type="InterPro" id="IPR020103">
    <property type="entry name" value="PsdUridine_synth_cat_dom_sf"/>
</dbReference>
<dbReference type="InterPro" id="IPR001406">
    <property type="entry name" value="PsdUridine_synth_TruA"/>
</dbReference>
<dbReference type="InterPro" id="IPR020097">
    <property type="entry name" value="PsdUridine_synth_TruA_a/b_dom"/>
</dbReference>
<dbReference type="InterPro" id="IPR020095">
    <property type="entry name" value="PsdUridine_synth_TruA_C"/>
</dbReference>
<dbReference type="InterPro" id="IPR020094">
    <property type="entry name" value="TruA/RsuA/RluB/E/F_N"/>
</dbReference>
<dbReference type="NCBIfam" id="TIGR00071">
    <property type="entry name" value="hisT_truA"/>
    <property type="match status" value="1"/>
</dbReference>
<dbReference type="PANTHER" id="PTHR11142">
    <property type="entry name" value="PSEUDOURIDYLATE SYNTHASE"/>
    <property type="match status" value="1"/>
</dbReference>
<dbReference type="PANTHER" id="PTHR11142:SF0">
    <property type="entry name" value="TRNA PSEUDOURIDINE SYNTHASE-LIKE 1"/>
    <property type="match status" value="1"/>
</dbReference>
<dbReference type="Pfam" id="PF01416">
    <property type="entry name" value="PseudoU_synth_1"/>
    <property type="match status" value="2"/>
</dbReference>
<dbReference type="PIRSF" id="PIRSF001430">
    <property type="entry name" value="tRNA_psdUrid_synth"/>
    <property type="match status" value="1"/>
</dbReference>
<dbReference type="SUPFAM" id="SSF55120">
    <property type="entry name" value="Pseudouridine synthase"/>
    <property type="match status" value="1"/>
</dbReference>
<evidence type="ECO:0000255" key="1">
    <source>
        <dbReference type="HAMAP-Rule" id="MF_00171"/>
    </source>
</evidence>
<keyword id="KW-0413">Isomerase</keyword>
<keyword id="KW-0819">tRNA processing</keyword>
<comment type="function">
    <text evidence="1">Formation of pseudouridine at positions 38, 39 and 40 in the anticodon stem and loop of transfer RNAs.</text>
</comment>
<comment type="catalytic activity">
    <reaction evidence="1">
        <text>uridine(38/39/40) in tRNA = pseudouridine(38/39/40) in tRNA</text>
        <dbReference type="Rhea" id="RHEA:22376"/>
        <dbReference type="Rhea" id="RHEA-COMP:10085"/>
        <dbReference type="Rhea" id="RHEA-COMP:10087"/>
        <dbReference type="ChEBI" id="CHEBI:65314"/>
        <dbReference type="ChEBI" id="CHEBI:65315"/>
        <dbReference type="EC" id="5.4.99.12"/>
    </reaction>
</comment>
<comment type="subunit">
    <text evidence="1">Homodimer.</text>
</comment>
<comment type="similarity">
    <text evidence="1">Belongs to the tRNA pseudouridine synthase TruA family.</text>
</comment>
<name>TRUA_HISS2</name>
<reference key="1">
    <citation type="submission" date="2008-02" db="EMBL/GenBank/DDBJ databases">
        <title>Complete sequence of Haemophilus somnus 2336.</title>
        <authorList>
            <consortium name="US DOE Joint Genome Institute"/>
            <person name="Siddaramappa S."/>
            <person name="Duncan A.J."/>
            <person name="Challacombe J.F."/>
            <person name="Rainey D."/>
            <person name="Gillaspy A.F."/>
            <person name="Carson M."/>
            <person name="Gipson J."/>
            <person name="Gipson M."/>
            <person name="Bruce D."/>
            <person name="Detter J.C."/>
            <person name="Han C.S."/>
            <person name="Land M."/>
            <person name="Tapia R."/>
            <person name="Thompson L.S."/>
            <person name="Orvis J."/>
            <person name="Zaitshik J."/>
            <person name="Barnes G."/>
            <person name="Brettin T.S."/>
            <person name="Dyer D.W."/>
            <person name="Inzana T.J."/>
        </authorList>
    </citation>
    <scope>NUCLEOTIDE SEQUENCE [LARGE SCALE GENOMIC DNA]</scope>
    <source>
        <strain>2336</strain>
    </source>
</reference>
<organism>
    <name type="scientific">Histophilus somni (strain 2336)</name>
    <name type="common">Haemophilus somnus</name>
    <dbReference type="NCBI Taxonomy" id="228400"/>
    <lineage>
        <taxon>Bacteria</taxon>
        <taxon>Pseudomonadati</taxon>
        <taxon>Pseudomonadota</taxon>
        <taxon>Gammaproteobacteria</taxon>
        <taxon>Pasteurellales</taxon>
        <taxon>Pasteurellaceae</taxon>
        <taxon>Histophilus</taxon>
    </lineage>
</organism>
<gene>
    <name evidence="1" type="primary">truA</name>
    <name type="ordered locus">HSM_0804</name>
</gene>
<protein>
    <recommendedName>
        <fullName evidence="1">tRNA pseudouridine synthase A</fullName>
        <ecNumber evidence="1">5.4.99.12</ecNumber>
    </recommendedName>
    <alternativeName>
        <fullName evidence="1">tRNA pseudouridine(38-40) synthase</fullName>
    </alternativeName>
    <alternativeName>
        <fullName evidence="1">tRNA pseudouridylate synthase I</fullName>
    </alternativeName>
    <alternativeName>
        <fullName evidence="1">tRNA-uridine isomerase I</fullName>
    </alternativeName>
</protein>
<accession>B0USP1</accession>
<proteinExistence type="inferred from homology"/>
<sequence length="269" mass="30642">MKIALGIEYNGTHYFGWQRQANVTSVQEKLESAVSFVANEFCQIYCAGRTDSGVHATGQVVHFDTKAIRSEKAWTFGLNANLPADIAVRWAKVVSEDFHARFSATARRYRYLIYNHPLRSALFPTGVTHHHVALDHHLMHQAGQYLLGEHDFSSFRAAQCQSNTPWRNIHHLHVFRQANYIIVDIQANAFVHHMVRNIVGSLLEIGSGKQPVEWMDWLLTQKDRTLAAPTAKPDGLYLVEVKYPNHFNLPKNPLGPLFLGEPKIDFHHD</sequence>
<feature type="chain" id="PRO_1000077092" description="tRNA pseudouridine synthase A">
    <location>
        <begin position="1"/>
        <end position="269"/>
    </location>
</feature>
<feature type="active site" description="Nucleophile" evidence="1">
    <location>
        <position position="51"/>
    </location>
</feature>
<feature type="binding site" evidence="1">
    <location>
        <position position="109"/>
    </location>
    <ligand>
        <name>substrate</name>
    </ligand>
</feature>